<reference key="1">
    <citation type="journal article" date="2009" name="Appl. Environ. Microbiol.">
        <title>Genomic analysis of 'Elusimicrobium minutum,' the first cultivated representative of the phylum 'Elusimicrobia' (formerly termite group 1).</title>
        <authorList>
            <person name="Herlemann D.P.R."/>
            <person name="Geissinger O."/>
            <person name="Ikeda-Ohtsubo W."/>
            <person name="Kunin V."/>
            <person name="Sun H."/>
            <person name="Lapidus A."/>
            <person name="Hugenholtz P."/>
            <person name="Brune A."/>
        </authorList>
    </citation>
    <scope>NUCLEOTIDE SEQUENCE [LARGE SCALE GENOMIC DNA]</scope>
    <source>
        <strain>Pei191</strain>
    </source>
</reference>
<sequence>MVKLNELFPKHGSRKAKRRIGLGVGSGLGRSATKGMKGQSSRSGNTKKESKEGGQMPLYRRVPKSGFSNATFAKRFDYVNIGSLEKACKAGEEVTPETMKTLGLVKCAKRVKVLANGELKKGLKVSAHGFSATAKAAIEKAGGSVTVIEKK</sequence>
<feature type="chain" id="PRO_1000166296" description="Large ribosomal subunit protein uL15">
    <location>
        <begin position="1"/>
        <end position="151"/>
    </location>
</feature>
<feature type="region of interest" description="Disordered" evidence="2">
    <location>
        <begin position="1"/>
        <end position="62"/>
    </location>
</feature>
<feature type="compositionally biased region" description="Basic residues" evidence="2">
    <location>
        <begin position="11"/>
        <end position="20"/>
    </location>
</feature>
<proteinExistence type="inferred from homology"/>
<accession>B2KEK3</accession>
<keyword id="KW-1185">Reference proteome</keyword>
<keyword id="KW-0687">Ribonucleoprotein</keyword>
<keyword id="KW-0689">Ribosomal protein</keyword>
<keyword id="KW-0694">RNA-binding</keyword>
<keyword id="KW-0699">rRNA-binding</keyword>
<evidence type="ECO:0000255" key="1">
    <source>
        <dbReference type="HAMAP-Rule" id="MF_01341"/>
    </source>
</evidence>
<evidence type="ECO:0000256" key="2">
    <source>
        <dbReference type="SAM" id="MobiDB-lite"/>
    </source>
</evidence>
<evidence type="ECO:0000305" key="3"/>
<comment type="function">
    <text evidence="1">Binds to the 23S rRNA.</text>
</comment>
<comment type="subunit">
    <text evidence="1">Part of the 50S ribosomal subunit.</text>
</comment>
<comment type="similarity">
    <text evidence="1">Belongs to the universal ribosomal protein uL15 family.</text>
</comment>
<gene>
    <name evidence="1" type="primary">rplO</name>
    <name type="ordered locus">Emin_1400</name>
</gene>
<protein>
    <recommendedName>
        <fullName evidence="1">Large ribosomal subunit protein uL15</fullName>
    </recommendedName>
    <alternativeName>
        <fullName evidence="3">50S ribosomal protein L15</fullName>
    </alternativeName>
</protein>
<name>RL15_ELUMP</name>
<organism>
    <name type="scientific">Elusimicrobium minutum (strain Pei191)</name>
    <dbReference type="NCBI Taxonomy" id="445932"/>
    <lineage>
        <taxon>Bacteria</taxon>
        <taxon>Pseudomonadati</taxon>
        <taxon>Elusimicrobiota</taxon>
        <taxon>Elusimicrobia</taxon>
        <taxon>Elusimicrobiales</taxon>
        <taxon>Elusimicrobiaceae</taxon>
        <taxon>Elusimicrobium</taxon>
    </lineage>
</organism>
<dbReference type="EMBL" id="CP001055">
    <property type="protein sequence ID" value="ACC98949.1"/>
    <property type="molecule type" value="Genomic_DNA"/>
</dbReference>
<dbReference type="RefSeq" id="WP_012415564.1">
    <property type="nucleotide sequence ID" value="NC_010644.1"/>
</dbReference>
<dbReference type="SMR" id="B2KEK3"/>
<dbReference type="STRING" id="445932.Emin_1400"/>
<dbReference type="KEGG" id="emi:Emin_1400"/>
<dbReference type="HOGENOM" id="CLU_055188_4_2_0"/>
<dbReference type="OrthoDB" id="9810293at2"/>
<dbReference type="Proteomes" id="UP000001029">
    <property type="component" value="Chromosome"/>
</dbReference>
<dbReference type="GO" id="GO:0022625">
    <property type="term" value="C:cytosolic large ribosomal subunit"/>
    <property type="evidence" value="ECO:0007669"/>
    <property type="project" value="TreeGrafter"/>
</dbReference>
<dbReference type="GO" id="GO:0019843">
    <property type="term" value="F:rRNA binding"/>
    <property type="evidence" value="ECO:0007669"/>
    <property type="project" value="UniProtKB-UniRule"/>
</dbReference>
<dbReference type="GO" id="GO:0003735">
    <property type="term" value="F:structural constituent of ribosome"/>
    <property type="evidence" value="ECO:0007669"/>
    <property type="project" value="InterPro"/>
</dbReference>
<dbReference type="GO" id="GO:0006412">
    <property type="term" value="P:translation"/>
    <property type="evidence" value="ECO:0007669"/>
    <property type="project" value="UniProtKB-UniRule"/>
</dbReference>
<dbReference type="Gene3D" id="3.100.10.10">
    <property type="match status" value="1"/>
</dbReference>
<dbReference type="HAMAP" id="MF_01341">
    <property type="entry name" value="Ribosomal_uL15"/>
    <property type="match status" value="1"/>
</dbReference>
<dbReference type="InterPro" id="IPR030878">
    <property type="entry name" value="Ribosomal_uL15"/>
</dbReference>
<dbReference type="InterPro" id="IPR021131">
    <property type="entry name" value="Ribosomal_uL15/eL18"/>
</dbReference>
<dbReference type="InterPro" id="IPR036227">
    <property type="entry name" value="Ribosomal_uL15/eL18_sf"/>
</dbReference>
<dbReference type="InterPro" id="IPR005749">
    <property type="entry name" value="Ribosomal_uL15_bac-type"/>
</dbReference>
<dbReference type="InterPro" id="IPR001196">
    <property type="entry name" value="Ribosomal_uL15_CS"/>
</dbReference>
<dbReference type="NCBIfam" id="TIGR01071">
    <property type="entry name" value="rplO_bact"/>
    <property type="match status" value="1"/>
</dbReference>
<dbReference type="PANTHER" id="PTHR12934">
    <property type="entry name" value="50S RIBOSOMAL PROTEIN L15"/>
    <property type="match status" value="1"/>
</dbReference>
<dbReference type="PANTHER" id="PTHR12934:SF11">
    <property type="entry name" value="LARGE RIBOSOMAL SUBUNIT PROTEIN UL15M"/>
    <property type="match status" value="1"/>
</dbReference>
<dbReference type="Pfam" id="PF00828">
    <property type="entry name" value="Ribosomal_L27A"/>
    <property type="match status" value="1"/>
</dbReference>
<dbReference type="SUPFAM" id="SSF52080">
    <property type="entry name" value="Ribosomal proteins L15p and L18e"/>
    <property type="match status" value="1"/>
</dbReference>
<dbReference type="PROSITE" id="PS00475">
    <property type="entry name" value="RIBOSOMAL_L15"/>
    <property type="match status" value="1"/>
</dbReference>